<proteinExistence type="inferred from homology"/>
<comment type="function">
    <text evidence="1">Promotes RNA polymerase assembly. Latches the N- and C-terminal regions of the beta' subunit thereby facilitating its interaction with the beta and alpha subunits.</text>
</comment>
<comment type="catalytic activity">
    <reaction evidence="1">
        <text>RNA(n) + a ribonucleoside 5'-triphosphate = RNA(n+1) + diphosphate</text>
        <dbReference type="Rhea" id="RHEA:21248"/>
        <dbReference type="Rhea" id="RHEA-COMP:14527"/>
        <dbReference type="Rhea" id="RHEA-COMP:17342"/>
        <dbReference type="ChEBI" id="CHEBI:33019"/>
        <dbReference type="ChEBI" id="CHEBI:61557"/>
        <dbReference type="ChEBI" id="CHEBI:140395"/>
        <dbReference type="EC" id="2.7.7.6"/>
    </reaction>
</comment>
<comment type="subunit">
    <text evidence="1">The RNAP catalytic core consists of 2 alpha, 1 beta, 1 beta' and 1 omega subunit. When a sigma factor is associated with the core the holoenzyme is formed, which can initiate transcription.</text>
</comment>
<comment type="similarity">
    <text evidence="1">Belongs to the RNA polymerase subunit omega family.</text>
</comment>
<dbReference type="EC" id="2.7.7.6" evidence="1"/>
<dbReference type="EMBL" id="CP000260">
    <property type="protein sequence ID" value="ABF34521.1"/>
    <property type="molecule type" value="Genomic_DNA"/>
</dbReference>
<dbReference type="RefSeq" id="WP_002983650.1">
    <property type="nucleotide sequence ID" value="NZ_CVUH01000010.1"/>
</dbReference>
<dbReference type="SMR" id="Q1JFN8"/>
<dbReference type="GeneID" id="69900498"/>
<dbReference type="KEGG" id="sph:MGAS10270_Spy1456"/>
<dbReference type="HOGENOM" id="CLU_125406_0_0_9"/>
<dbReference type="Proteomes" id="UP000002436">
    <property type="component" value="Chromosome"/>
</dbReference>
<dbReference type="GO" id="GO:0000428">
    <property type="term" value="C:DNA-directed RNA polymerase complex"/>
    <property type="evidence" value="ECO:0007669"/>
    <property type="project" value="UniProtKB-KW"/>
</dbReference>
<dbReference type="GO" id="GO:0003677">
    <property type="term" value="F:DNA binding"/>
    <property type="evidence" value="ECO:0007669"/>
    <property type="project" value="UniProtKB-UniRule"/>
</dbReference>
<dbReference type="GO" id="GO:0003899">
    <property type="term" value="F:DNA-directed RNA polymerase activity"/>
    <property type="evidence" value="ECO:0007669"/>
    <property type="project" value="UniProtKB-UniRule"/>
</dbReference>
<dbReference type="GO" id="GO:0006351">
    <property type="term" value="P:DNA-templated transcription"/>
    <property type="evidence" value="ECO:0007669"/>
    <property type="project" value="UniProtKB-UniRule"/>
</dbReference>
<dbReference type="Gene3D" id="3.90.940.10">
    <property type="match status" value="1"/>
</dbReference>
<dbReference type="HAMAP" id="MF_00366">
    <property type="entry name" value="RNApol_bact_RpoZ"/>
    <property type="match status" value="1"/>
</dbReference>
<dbReference type="InterPro" id="IPR003716">
    <property type="entry name" value="DNA-dir_RNA_pol_omega"/>
</dbReference>
<dbReference type="InterPro" id="IPR006110">
    <property type="entry name" value="Pol_omega/Rpo6/RPB6"/>
</dbReference>
<dbReference type="InterPro" id="IPR036161">
    <property type="entry name" value="RPB6/omega-like_sf"/>
</dbReference>
<dbReference type="NCBIfam" id="TIGR00690">
    <property type="entry name" value="rpoZ"/>
    <property type="match status" value="1"/>
</dbReference>
<dbReference type="PANTHER" id="PTHR34476">
    <property type="entry name" value="DNA-DIRECTED RNA POLYMERASE SUBUNIT OMEGA"/>
    <property type="match status" value="1"/>
</dbReference>
<dbReference type="PANTHER" id="PTHR34476:SF1">
    <property type="entry name" value="DNA-DIRECTED RNA POLYMERASE SUBUNIT OMEGA"/>
    <property type="match status" value="1"/>
</dbReference>
<dbReference type="Pfam" id="PF01192">
    <property type="entry name" value="RNA_pol_Rpb6"/>
    <property type="match status" value="1"/>
</dbReference>
<dbReference type="SMART" id="SM01409">
    <property type="entry name" value="RNA_pol_Rpb6"/>
    <property type="match status" value="1"/>
</dbReference>
<dbReference type="SUPFAM" id="SSF63562">
    <property type="entry name" value="RPB6/omega subunit-like"/>
    <property type="match status" value="1"/>
</dbReference>
<feature type="chain" id="PRO_1000006026" description="DNA-directed RNA polymerase subunit omega">
    <location>
        <begin position="1"/>
        <end position="105"/>
    </location>
</feature>
<keyword id="KW-0240">DNA-directed RNA polymerase</keyword>
<keyword id="KW-0548">Nucleotidyltransferase</keyword>
<keyword id="KW-0804">Transcription</keyword>
<keyword id="KW-0808">Transferase</keyword>
<protein>
    <recommendedName>
        <fullName evidence="1">DNA-directed RNA polymerase subunit omega</fullName>
        <shortName evidence="1">RNAP omega subunit</shortName>
        <ecNumber evidence="1">2.7.7.6</ecNumber>
    </recommendedName>
    <alternativeName>
        <fullName evidence="1">RNA polymerase omega subunit</fullName>
    </alternativeName>
    <alternativeName>
        <fullName evidence="1">Transcriptase subunit omega</fullName>
    </alternativeName>
</protein>
<name>RPOZ_STRPD</name>
<sequence length="105" mass="11837">MMLKPSIDTLLDKVPSKYSLVILQAKRAHELEAGATPTQEFKSVKSTLQALEEIESGNVVIHPDPSAKREAVRAKIEAERLAKEEEERKIKEQIAKEKEEEGEKI</sequence>
<organism>
    <name type="scientific">Streptococcus pyogenes serotype M2 (strain MGAS10270)</name>
    <dbReference type="NCBI Taxonomy" id="370552"/>
    <lineage>
        <taxon>Bacteria</taxon>
        <taxon>Bacillati</taxon>
        <taxon>Bacillota</taxon>
        <taxon>Bacilli</taxon>
        <taxon>Lactobacillales</taxon>
        <taxon>Streptococcaceae</taxon>
        <taxon>Streptococcus</taxon>
    </lineage>
</organism>
<gene>
    <name evidence="1" type="primary">rpoZ</name>
    <name type="ordered locus">MGAS10270_Spy1456</name>
</gene>
<accession>Q1JFN8</accession>
<evidence type="ECO:0000255" key="1">
    <source>
        <dbReference type="HAMAP-Rule" id="MF_00366"/>
    </source>
</evidence>
<reference key="1">
    <citation type="journal article" date="2006" name="Proc. Natl. Acad. Sci. U.S.A.">
        <title>Molecular genetic anatomy of inter- and intraserotype variation in the human bacterial pathogen group A Streptococcus.</title>
        <authorList>
            <person name="Beres S.B."/>
            <person name="Richter E.W."/>
            <person name="Nagiec M.J."/>
            <person name="Sumby P."/>
            <person name="Porcella S.F."/>
            <person name="DeLeo F.R."/>
            <person name="Musser J.M."/>
        </authorList>
    </citation>
    <scope>NUCLEOTIDE SEQUENCE [LARGE SCALE GENOMIC DNA]</scope>
    <source>
        <strain>MGAS10270</strain>
    </source>
</reference>